<comment type="subcellular location">
    <subcellularLocation>
        <location>Plastid</location>
        <location>Chloroplast thylakoid membrane</location>
    </subcellularLocation>
    <text>Associated with the photosystem II complex.</text>
</comment>
<comment type="similarity">
    <text evidence="2">Belongs to the PsbQ family.</text>
</comment>
<protein>
    <recommendedName>
        <fullName>Oxygen-evolving enhancer protein 3</fullName>
        <shortName>OEE3</shortName>
    </recommendedName>
    <alternativeName>
        <fullName>16 kDa subunit of oxygen-evolving system of photosystem II</fullName>
    </alternativeName>
</protein>
<feature type="chain" id="PRO_0000100363" description="Oxygen-evolving enhancer protein 3">
    <location>
        <begin position="1"/>
        <end position="32" status="greater than"/>
    </location>
</feature>
<feature type="region of interest" description="Disordered" evidence="1">
    <location>
        <begin position="1"/>
        <end position="32"/>
    </location>
</feature>
<feature type="non-terminal residue">
    <location>
        <position position="32"/>
    </location>
</feature>
<proteinExistence type="evidence at protein level"/>
<organism>
    <name type="scientific">Pisum sativum</name>
    <name type="common">Garden pea</name>
    <name type="synonym">Lathyrus oleraceus</name>
    <dbReference type="NCBI Taxonomy" id="3888"/>
    <lineage>
        <taxon>Eukaryota</taxon>
        <taxon>Viridiplantae</taxon>
        <taxon>Streptophyta</taxon>
        <taxon>Embryophyta</taxon>
        <taxon>Tracheophyta</taxon>
        <taxon>Spermatophyta</taxon>
        <taxon>Magnoliopsida</taxon>
        <taxon>eudicotyledons</taxon>
        <taxon>Gunneridae</taxon>
        <taxon>Pentapetalae</taxon>
        <taxon>rosids</taxon>
        <taxon>fabids</taxon>
        <taxon>Fabales</taxon>
        <taxon>Fabaceae</taxon>
        <taxon>Papilionoideae</taxon>
        <taxon>50 kb inversion clade</taxon>
        <taxon>NPAAA clade</taxon>
        <taxon>Hologalegina</taxon>
        <taxon>IRL clade</taxon>
        <taxon>Fabeae</taxon>
        <taxon>Pisum</taxon>
    </lineage>
</organism>
<reference key="1">
    <citation type="journal article" date="1987" name="Prog. Photosyn. Res.">
        <title>Partial amino acid sequences of the proteins of pea and spinach photosystem II complex.</title>
        <authorList>
            <person name="Murata N."/>
            <person name="Kajiura H."/>
            <person name="Fujimura Y."/>
            <person name="Miyao M."/>
            <person name="Murata T."/>
            <person name="Watanabe A."/>
            <person name="Shinozaki K."/>
        </authorList>
    </citation>
    <scope>PROTEIN SEQUENCE</scope>
</reference>
<dbReference type="PIR" id="S03273">
    <property type="entry name" value="S03273"/>
</dbReference>
<dbReference type="GO" id="GO:0009535">
    <property type="term" value="C:chloroplast thylakoid membrane"/>
    <property type="evidence" value="ECO:0007669"/>
    <property type="project" value="UniProtKB-SubCell"/>
</dbReference>
<dbReference type="GO" id="GO:0009523">
    <property type="term" value="C:photosystem II"/>
    <property type="evidence" value="ECO:0007669"/>
    <property type="project" value="UniProtKB-KW"/>
</dbReference>
<dbReference type="GO" id="GO:0015979">
    <property type="term" value="P:photosynthesis"/>
    <property type="evidence" value="ECO:0007669"/>
    <property type="project" value="UniProtKB-KW"/>
</dbReference>
<dbReference type="Gene3D" id="1.20.120.290">
    <property type="entry name" value="Oxygen-evolving enhancer protein 3 (PsbQ), four-helix up-down bundle"/>
    <property type="match status" value="1"/>
</dbReference>
<dbReference type="InterPro" id="IPR023222">
    <property type="entry name" value="PsbQ-like_dom_sf"/>
</dbReference>
<name>PSBQ_PEA</name>
<accession>P19589</accession>
<keyword id="KW-0150">Chloroplast</keyword>
<keyword id="KW-0903">Direct protein sequencing</keyword>
<keyword id="KW-0472">Membrane</keyword>
<keyword id="KW-0602">Photosynthesis</keyword>
<keyword id="KW-0604">Photosystem II</keyword>
<keyword id="KW-0934">Plastid</keyword>
<keyword id="KW-0793">Thylakoid</keyword>
<sequence length="32" mass="3264">EAIPIKVGGPPPLSXGLPGTLNSDEARDLKLP</sequence>
<evidence type="ECO:0000256" key="1">
    <source>
        <dbReference type="SAM" id="MobiDB-lite"/>
    </source>
</evidence>
<evidence type="ECO:0000305" key="2"/>
<gene>
    <name type="primary">PSBQ</name>
</gene>